<organism>
    <name type="scientific">Synechocystis sp. (strain ATCC 27184 / PCC 6803 / Kazusa)</name>
    <dbReference type="NCBI Taxonomy" id="1111708"/>
    <lineage>
        <taxon>Bacteria</taxon>
        <taxon>Bacillati</taxon>
        <taxon>Cyanobacteriota</taxon>
        <taxon>Cyanophyceae</taxon>
        <taxon>Synechococcales</taxon>
        <taxon>Merismopediaceae</taxon>
        <taxon>Synechocystis</taxon>
    </lineage>
</organism>
<keyword id="KW-0963">Cytoplasm</keyword>
<keyword id="KW-1185">Reference proteome</keyword>
<keyword id="KW-0690">Ribosome biogenesis</keyword>
<accession>P72687</accession>
<reference key="1">
    <citation type="journal article" date="1996" name="DNA Res.">
        <title>Sequence analysis of the genome of the unicellular cyanobacterium Synechocystis sp. strain PCC6803. II. Sequence determination of the entire genome and assignment of potential protein-coding regions.</title>
        <authorList>
            <person name="Kaneko T."/>
            <person name="Sato S."/>
            <person name="Kotani H."/>
            <person name="Tanaka A."/>
            <person name="Asamizu E."/>
            <person name="Nakamura Y."/>
            <person name="Miyajima N."/>
            <person name="Hirosawa M."/>
            <person name="Sugiura M."/>
            <person name="Sasamoto S."/>
            <person name="Kimura T."/>
            <person name="Hosouchi T."/>
            <person name="Matsuno A."/>
            <person name="Muraki A."/>
            <person name="Nakazaki N."/>
            <person name="Naruo K."/>
            <person name="Okumura S."/>
            <person name="Shimpo S."/>
            <person name="Takeuchi C."/>
            <person name="Wada T."/>
            <person name="Watanabe A."/>
            <person name="Yamada M."/>
            <person name="Yasuda M."/>
            <person name="Tabata S."/>
        </authorList>
    </citation>
    <scope>NUCLEOTIDE SEQUENCE [LARGE SCALE GENOMIC DNA]</scope>
    <source>
        <strain>ATCC 27184 / PCC 6803 / Kazusa</strain>
    </source>
</reference>
<evidence type="ECO:0000255" key="1">
    <source>
        <dbReference type="HAMAP-Rule" id="MF_01077"/>
    </source>
</evidence>
<evidence type="ECO:0000305" key="2"/>
<protein>
    <recommendedName>
        <fullName evidence="1">Ribosome maturation factor RimP</fullName>
    </recommendedName>
</protein>
<comment type="function">
    <text evidence="1">Required for maturation of 30S ribosomal subunits.</text>
</comment>
<comment type="subcellular location">
    <subcellularLocation>
        <location evidence="1">Cytoplasm</location>
    </subcellularLocation>
</comment>
<comment type="similarity">
    <text evidence="1">Belongs to the RimP family.</text>
</comment>
<comment type="sequence caution" evidence="2">
    <conflict type="erroneous initiation">
        <sequence resource="EMBL-CDS" id="BAA16694"/>
    </conflict>
</comment>
<name>RIMP_SYNY3</name>
<feature type="chain" id="PRO_0000181942" description="Ribosome maturation factor RimP">
    <location>
        <begin position="1"/>
        <end position="151"/>
    </location>
</feature>
<proteinExistence type="inferred from homology"/>
<dbReference type="EMBL" id="BA000022">
    <property type="protein sequence ID" value="BAA16694.1"/>
    <property type="status" value="ALT_INIT"/>
    <property type="molecule type" value="Genomic_DNA"/>
</dbReference>
<dbReference type="PIR" id="S74542">
    <property type="entry name" value="S74542"/>
</dbReference>
<dbReference type="SMR" id="P72687"/>
<dbReference type="FunCoup" id="P72687">
    <property type="interactions" value="250"/>
</dbReference>
<dbReference type="IntAct" id="P72687">
    <property type="interactions" value="1"/>
</dbReference>
<dbReference type="STRING" id="1148.gene:10497549"/>
<dbReference type="PaxDb" id="1148-1651766"/>
<dbReference type="EnsemblBacteria" id="BAA16694">
    <property type="protein sequence ID" value="BAA16694"/>
    <property type="gene ID" value="BAA16694"/>
</dbReference>
<dbReference type="KEGG" id="syn:slr0742"/>
<dbReference type="eggNOG" id="COG0779">
    <property type="taxonomic scope" value="Bacteria"/>
</dbReference>
<dbReference type="InParanoid" id="P72687"/>
<dbReference type="PhylomeDB" id="P72687"/>
<dbReference type="Proteomes" id="UP000001425">
    <property type="component" value="Chromosome"/>
</dbReference>
<dbReference type="GO" id="GO:0005829">
    <property type="term" value="C:cytosol"/>
    <property type="evidence" value="ECO:0000318"/>
    <property type="project" value="GO_Central"/>
</dbReference>
<dbReference type="GO" id="GO:0000028">
    <property type="term" value="P:ribosomal small subunit assembly"/>
    <property type="evidence" value="ECO:0000318"/>
    <property type="project" value="GO_Central"/>
</dbReference>
<dbReference type="GO" id="GO:0006412">
    <property type="term" value="P:translation"/>
    <property type="evidence" value="ECO:0000318"/>
    <property type="project" value="GO_Central"/>
</dbReference>
<dbReference type="CDD" id="cd01734">
    <property type="entry name" value="YlxS_C"/>
    <property type="match status" value="1"/>
</dbReference>
<dbReference type="FunFam" id="3.30.300.70:FF:000001">
    <property type="entry name" value="Ribosome maturation factor RimP"/>
    <property type="match status" value="1"/>
</dbReference>
<dbReference type="Gene3D" id="3.30.300.70">
    <property type="entry name" value="RimP-like superfamily, N-terminal"/>
    <property type="match status" value="1"/>
</dbReference>
<dbReference type="HAMAP" id="MF_01077">
    <property type="entry name" value="RimP"/>
    <property type="match status" value="1"/>
</dbReference>
<dbReference type="InterPro" id="IPR003728">
    <property type="entry name" value="Ribosome_maturation_RimP"/>
</dbReference>
<dbReference type="InterPro" id="IPR028998">
    <property type="entry name" value="RimP_C"/>
</dbReference>
<dbReference type="InterPro" id="IPR036847">
    <property type="entry name" value="RimP_C_sf"/>
</dbReference>
<dbReference type="InterPro" id="IPR028989">
    <property type="entry name" value="RimP_N"/>
</dbReference>
<dbReference type="InterPro" id="IPR035956">
    <property type="entry name" value="RimP_N_sf"/>
</dbReference>
<dbReference type="NCBIfam" id="NF000935">
    <property type="entry name" value="PRK00092.3-3"/>
    <property type="match status" value="1"/>
</dbReference>
<dbReference type="PANTHER" id="PTHR33867">
    <property type="entry name" value="RIBOSOME MATURATION FACTOR RIMP"/>
    <property type="match status" value="1"/>
</dbReference>
<dbReference type="PANTHER" id="PTHR33867:SF1">
    <property type="entry name" value="RIBOSOME MATURATION FACTOR RIMP"/>
    <property type="match status" value="1"/>
</dbReference>
<dbReference type="Pfam" id="PF17384">
    <property type="entry name" value="DUF150_C"/>
    <property type="match status" value="1"/>
</dbReference>
<dbReference type="Pfam" id="PF02576">
    <property type="entry name" value="RimP_N"/>
    <property type="match status" value="1"/>
</dbReference>
<dbReference type="SUPFAM" id="SSF74942">
    <property type="entry name" value="YhbC-like, C-terminal domain"/>
    <property type="match status" value="1"/>
</dbReference>
<dbReference type="SUPFAM" id="SSF75420">
    <property type="entry name" value="YhbC-like, N-terminal domain"/>
    <property type="match status" value="1"/>
</dbReference>
<gene>
    <name evidence="1" type="primary">rimP</name>
    <name type="ordered locus">slr0742</name>
</gene>
<sequence>MTHPVIPDILALAQPIAEDLGLEVTDAVFQTNKRPPVLRIDIRNLQQDTSLNDCEAFSRSFEAQLEESSLIASAYVLEVSSPGISPYLATERDFIAFKGFEVVVTSDNPHQGQSQWQGSLQGRDGEAVYLSIRGRTVAIPLTVGLTVRLPH</sequence>